<keyword id="KW-0413">Isomerase</keyword>
<keyword id="KW-0423">Lactose metabolism</keyword>
<protein>
    <recommendedName>
        <fullName evidence="1">Galactose-6-phosphate isomerase subunit LacB 2</fullName>
        <ecNumber evidence="1">5.3.1.26</ecNumber>
    </recommendedName>
</protein>
<comment type="catalytic activity">
    <reaction evidence="1">
        <text>aldehydo-D-galactose 6-phosphate = keto-D-tagatose 6-phosphate</text>
        <dbReference type="Rhea" id="RHEA:13033"/>
        <dbReference type="ChEBI" id="CHEBI:58255"/>
        <dbReference type="ChEBI" id="CHEBI:134283"/>
        <dbReference type="EC" id="5.3.1.26"/>
    </reaction>
</comment>
<comment type="pathway">
    <text evidence="1">Carbohydrate metabolism; D-galactose 6-phosphate degradation; D-tagatose 6-phosphate from D-galactose 6-phosphate: step 1/1.</text>
</comment>
<comment type="subunit">
    <text evidence="1">Heteromultimeric protein consisting of LacA and LacB.</text>
</comment>
<comment type="similarity">
    <text evidence="1">Belongs to the LacAB/RpiB family.</text>
</comment>
<evidence type="ECO:0000255" key="1">
    <source>
        <dbReference type="HAMAP-Rule" id="MF_01556"/>
    </source>
</evidence>
<reference key="1">
    <citation type="journal article" date="2003" name="Genome Res.">
        <title>Genome sequence of an M3 strain of Streptococcus pyogenes reveals a large-scale genomic rearrangement in invasive strains and new insights into phage evolution.</title>
        <authorList>
            <person name="Nakagawa I."/>
            <person name="Kurokawa K."/>
            <person name="Yamashita A."/>
            <person name="Nakata M."/>
            <person name="Tomiyasu Y."/>
            <person name="Okahashi N."/>
            <person name="Kawabata S."/>
            <person name="Yamazaki K."/>
            <person name="Shiba T."/>
            <person name="Yasunaga T."/>
            <person name="Hayashi H."/>
            <person name="Hattori M."/>
            <person name="Hamada S."/>
        </authorList>
    </citation>
    <scope>NUCLEOTIDE SEQUENCE [LARGE SCALE GENOMIC DNA]</scope>
    <source>
        <strain>SSI-1</strain>
    </source>
</reference>
<proteinExistence type="inferred from homology"/>
<organism>
    <name type="scientific">Streptococcus pyogenes serotype M3 (strain SSI-1)</name>
    <dbReference type="NCBI Taxonomy" id="193567"/>
    <lineage>
        <taxon>Bacteria</taxon>
        <taxon>Bacillati</taxon>
        <taxon>Bacillota</taxon>
        <taxon>Bacilli</taxon>
        <taxon>Lactobacillales</taxon>
        <taxon>Streptococcaceae</taxon>
        <taxon>Streptococcus</taxon>
    </lineage>
</organism>
<name>LACB2_STRPQ</name>
<sequence length="171" mass="18922">MKIAVGCDHIVTYEKIAVVDYLKTQGHEIIDCGTYDNVRTHYPIFGKKVGEAVASGEAELGVVICGTGVGITNAVNKVPGIRSALVRDMTSAIYSKEELNANVIGFGGKIIGGLLMNDIIDAFLAAEYKPTEENKKWIEKMDSLQHASQDQNNPHFFDEFLEKWDRGEYHD</sequence>
<feature type="chain" id="PRO_0000411393" description="Galactose-6-phosphate isomerase subunit LacB 2">
    <location>
        <begin position="1"/>
        <end position="171"/>
    </location>
</feature>
<accession>P0DC11</accession>
<accession>Q79W96</accession>
<accession>Q8K5U7</accession>
<dbReference type="EC" id="5.3.1.26" evidence="1"/>
<dbReference type="EMBL" id="BA000034">
    <property type="protein sequence ID" value="BAC64751.1"/>
    <property type="molecule type" value="Genomic_DNA"/>
</dbReference>
<dbReference type="SMR" id="P0DC11"/>
<dbReference type="KEGG" id="sps:SPs1656"/>
<dbReference type="HOGENOM" id="CLU_091396_2_0_9"/>
<dbReference type="UniPathway" id="UPA00702">
    <property type="reaction ID" value="UER00714"/>
</dbReference>
<dbReference type="GO" id="GO:0050044">
    <property type="term" value="F:galactose-6-phosphate isomerase activity"/>
    <property type="evidence" value="ECO:0007669"/>
    <property type="project" value="UniProtKB-UniRule"/>
</dbReference>
<dbReference type="GO" id="GO:0004751">
    <property type="term" value="F:ribose-5-phosphate isomerase activity"/>
    <property type="evidence" value="ECO:0007669"/>
    <property type="project" value="TreeGrafter"/>
</dbReference>
<dbReference type="GO" id="GO:0019316">
    <property type="term" value="P:D-allose catabolic process"/>
    <property type="evidence" value="ECO:0007669"/>
    <property type="project" value="TreeGrafter"/>
</dbReference>
<dbReference type="GO" id="GO:0019388">
    <property type="term" value="P:galactose catabolic process"/>
    <property type="evidence" value="ECO:0007669"/>
    <property type="project" value="UniProtKB-UniPathway"/>
</dbReference>
<dbReference type="GO" id="GO:0019512">
    <property type="term" value="P:lactose catabolic process via tagatose-6-phosphate"/>
    <property type="evidence" value="ECO:0007669"/>
    <property type="project" value="UniProtKB-UniRule"/>
</dbReference>
<dbReference type="GO" id="GO:0009052">
    <property type="term" value="P:pentose-phosphate shunt, non-oxidative branch"/>
    <property type="evidence" value="ECO:0007669"/>
    <property type="project" value="TreeGrafter"/>
</dbReference>
<dbReference type="Gene3D" id="3.40.1400.10">
    <property type="entry name" value="Sugar-phosphate isomerase, RpiB/LacA/LacB"/>
    <property type="match status" value="1"/>
</dbReference>
<dbReference type="HAMAP" id="MF_01556">
    <property type="entry name" value="LacB"/>
    <property type="match status" value="1"/>
</dbReference>
<dbReference type="InterPro" id="IPR004784">
    <property type="entry name" value="LacB"/>
</dbReference>
<dbReference type="InterPro" id="IPR003500">
    <property type="entry name" value="RpiB_LacA_LacB"/>
</dbReference>
<dbReference type="InterPro" id="IPR036569">
    <property type="entry name" value="RpiB_LacA_LacB_sf"/>
</dbReference>
<dbReference type="NCBIfam" id="NF004051">
    <property type="entry name" value="PRK05571.1"/>
    <property type="match status" value="1"/>
</dbReference>
<dbReference type="NCBIfam" id="NF006381">
    <property type="entry name" value="PRK08622.1"/>
    <property type="match status" value="1"/>
</dbReference>
<dbReference type="NCBIfam" id="TIGR00689">
    <property type="entry name" value="rpiB_lacA_lacB"/>
    <property type="match status" value="1"/>
</dbReference>
<dbReference type="PANTHER" id="PTHR30345:SF0">
    <property type="entry name" value="DNA DAMAGE-REPAIR_TOLERATION PROTEIN DRT102"/>
    <property type="match status" value="1"/>
</dbReference>
<dbReference type="PANTHER" id="PTHR30345">
    <property type="entry name" value="RIBOSE-5-PHOSPHATE ISOMERASE B"/>
    <property type="match status" value="1"/>
</dbReference>
<dbReference type="Pfam" id="PF02502">
    <property type="entry name" value="LacAB_rpiB"/>
    <property type="match status" value="1"/>
</dbReference>
<dbReference type="PIRSF" id="PIRSF005384">
    <property type="entry name" value="RpiB_LacA_B"/>
    <property type="match status" value="1"/>
</dbReference>
<dbReference type="SUPFAM" id="SSF89623">
    <property type="entry name" value="Ribose/Galactose isomerase RpiB/AlsB"/>
    <property type="match status" value="1"/>
</dbReference>
<gene>
    <name evidence="1" type="primary">lacB2</name>
    <name type="synonym">lacB.2</name>
    <name type="ordered locus">SPs1656</name>
</gene>